<name>VE6_COPV6</name>
<dbReference type="EMBL" id="D55633">
    <property type="protein sequence ID" value="BAA09498.1"/>
    <property type="molecule type" value="Genomic_DNA"/>
</dbReference>
<dbReference type="EMBL" id="L22695">
    <property type="protein sequence ID" value="AAA61744.1"/>
    <property type="molecule type" value="Genomic_DNA"/>
</dbReference>
<dbReference type="RefSeq" id="NP_056813.1">
    <property type="nucleotide sequence ID" value="NC_001619.1"/>
</dbReference>
<dbReference type="SMR" id="Q89808"/>
<dbReference type="GeneID" id="1497243"/>
<dbReference type="KEGG" id="vg:1497243"/>
<dbReference type="Proteomes" id="UP000008788">
    <property type="component" value="Segment"/>
</dbReference>
<dbReference type="Proteomes" id="UP000097271">
    <property type="component" value="Genome"/>
</dbReference>
<dbReference type="GO" id="GO:0030430">
    <property type="term" value="C:host cell cytoplasm"/>
    <property type="evidence" value="ECO:0007669"/>
    <property type="project" value="UniProtKB-SubCell"/>
</dbReference>
<dbReference type="GO" id="GO:0042025">
    <property type="term" value="C:host cell nucleus"/>
    <property type="evidence" value="ECO:0007669"/>
    <property type="project" value="UniProtKB-SubCell"/>
</dbReference>
<dbReference type="GO" id="GO:0003677">
    <property type="term" value="F:DNA binding"/>
    <property type="evidence" value="ECO:0007669"/>
    <property type="project" value="UniProtKB-UniRule"/>
</dbReference>
<dbReference type="GO" id="GO:0008270">
    <property type="term" value="F:zinc ion binding"/>
    <property type="evidence" value="ECO:0007669"/>
    <property type="project" value="UniProtKB-KW"/>
</dbReference>
<dbReference type="GO" id="GO:0006351">
    <property type="term" value="P:DNA-templated transcription"/>
    <property type="evidence" value="ECO:0007669"/>
    <property type="project" value="UniProtKB-UniRule"/>
</dbReference>
<dbReference type="GO" id="GO:0006355">
    <property type="term" value="P:regulation of DNA-templated transcription"/>
    <property type="evidence" value="ECO:0007669"/>
    <property type="project" value="UniProtKB-UniRule"/>
</dbReference>
<dbReference type="GO" id="GO:0052150">
    <property type="term" value="P:symbiont-mediated perturbation of host apoptosis"/>
    <property type="evidence" value="ECO:0007669"/>
    <property type="project" value="UniProtKB-KW"/>
</dbReference>
<dbReference type="GO" id="GO:0039648">
    <property type="term" value="P:symbiont-mediated perturbation of host ubiquitin-like protein modification"/>
    <property type="evidence" value="ECO:0007669"/>
    <property type="project" value="UniProtKB-UniRule"/>
</dbReference>
<dbReference type="GO" id="GO:0052170">
    <property type="term" value="P:symbiont-mediated suppression of host innate immune response"/>
    <property type="evidence" value="ECO:0007669"/>
    <property type="project" value="UniProtKB-KW"/>
</dbReference>
<dbReference type="GO" id="GO:0039502">
    <property type="term" value="P:symbiont-mediated suppression of host type I interferon-mediated signaling pathway"/>
    <property type="evidence" value="ECO:0007669"/>
    <property type="project" value="UniProtKB-UniRule"/>
</dbReference>
<dbReference type="Gene3D" id="3.30.240.40">
    <property type="entry name" value="E6 early regulatory protein"/>
    <property type="match status" value="2"/>
</dbReference>
<dbReference type="HAMAP" id="MF_04006">
    <property type="entry name" value="HPV_E6"/>
    <property type="match status" value="1"/>
</dbReference>
<dbReference type="InterPro" id="IPR001334">
    <property type="entry name" value="E6"/>
</dbReference>
<dbReference type="InterPro" id="IPR038575">
    <property type="entry name" value="E6_sf"/>
</dbReference>
<dbReference type="Pfam" id="PF00518">
    <property type="entry name" value="E6"/>
    <property type="match status" value="1"/>
</dbReference>
<dbReference type="SUPFAM" id="SSF161229">
    <property type="entry name" value="E6 C-terminal domain-like"/>
    <property type="match status" value="2"/>
</dbReference>
<reference key="1">
    <citation type="journal article" date="1994" name="Virology">
        <title>Canine oral papillomavirus genomic sequence: a unique 1.5-kb intervening sequence between the E2 and L2 open reading frames.</title>
        <authorList>
            <person name="Delius H."/>
            <person name="van Ranst M.A."/>
            <person name="Jenson A.B."/>
            <person name="zur Hausen H."/>
            <person name="Sundberg J.P."/>
        </authorList>
    </citation>
    <scope>NUCLEOTIDE SEQUENCE [GENOMIC DNA]</scope>
</reference>
<reference key="2">
    <citation type="journal article" date="1995" name="Int. J. Oncol.">
        <title>Nucleotide sequence of a canine oral papillomavirus containing a long noncoding region.</title>
        <authorList>
            <person name="Isegawa N."/>
            <person name="Ohta M."/>
            <person name="Shirasawa H."/>
            <person name="Tokita H."/>
            <person name="Simizu B."/>
            <person name="Yamaura A."/>
        </authorList>
    </citation>
    <scope>NUCLEOTIDE SEQUENCE [GENOMIC DNA]</scope>
</reference>
<accession>Q89808</accession>
<sequence>MFWGALLSMERPTSVRDLCMSLKLSLLDLSLACKFCGNNITNIEKLLFDKAGFQLIWRENNAFGCCQYCARVCSVVEQCFGSHRHLTSEELVNVTKTLQQLSLRCLGCLSILSEADKELCAELNDFSVVRGKTRGLCSLCRLPP</sequence>
<proteinExistence type="inferred from homology"/>
<organism>
    <name type="scientific">Canine oral papillomavirus (strain Y62)</name>
    <name type="common">COPV</name>
    <dbReference type="NCBI Taxonomy" id="766192"/>
    <lineage>
        <taxon>Viruses</taxon>
        <taxon>Monodnaviria</taxon>
        <taxon>Shotokuvirae</taxon>
        <taxon>Cossaviricota</taxon>
        <taxon>Papovaviricetes</taxon>
        <taxon>Zurhausenvirales</taxon>
        <taxon>Papillomaviridae</taxon>
        <taxon>Firstpapillomavirinae</taxon>
        <taxon>Lambdapapillomavirus</taxon>
        <taxon>Canine oral papillomavirus</taxon>
    </lineage>
</organism>
<organismHost>
    <name type="scientific">Canis lupus familiaris</name>
    <name type="common">Dog</name>
    <name type="synonym">Canis familiaris</name>
    <dbReference type="NCBI Taxonomy" id="9615"/>
</organismHost>
<keyword id="KW-0010">Activator</keyword>
<keyword id="KW-0238">DNA-binding</keyword>
<keyword id="KW-0244">Early protein</keyword>
<keyword id="KW-1035">Host cytoplasm</keyword>
<keyword id="KW-1048">Host nucleus</keyword>
<keyword id="KW-0945">Host-virus interaction</keyword>
<keyword id="KW-1090">Inhibition of host innate immune response by virus</keyword>
<keyword id="KW-0479">Metal-binding</keyword>
<keyword id="KW-1119">Modulation of host cell apoptosis by virus</keyword>
<keyword id="KW-1185">Reference proteome</keyword>
<keyword id="KW-0804">Transcription</keyword>
<keyword id="KW-0805">Transcription regulation</keyword>
<keyword id="KW-0899">Viral immunoevasion</keyword>
<keyword id="KW-0862">Zinc</keyword>
<keyword id="KW-0863">Zinc-finger</keyword>
<protein>
    <recommendedName>
        <fullName evidence="1">Protein E6</fullName>
    </recommendedName>
</protein>
<evidence type="ECO:0000255" key="1">
    <source>
        <dbReference type="HAMAP-Rule" id="MF_04006"/>
    </source>
</evidence>
<evidence type="ECO:0000305" key="2"/>
<feature type="chain" id="PRO_0000133385" description="Protein E6">
    <location>
        <begin position="1"/>
        <end position="144"/>
    </location>
</feature>
<feature type="zinc finger region" evidence="1">
    <location>
        <begin position="33"/>
        <end position="69"/>
    </location>
</feature>
<feature type="zinc finger region" evidence="1">
    <location>
        <begin position="105"/>
        <end position="140"/>
    </location>
</feature>
<gene>
    <name evidence="1" type="primary">E6</name>
</gene>
<comment type="function">
    <text evidence="1">Plays a major role in the induction and maintenance of cellular transformation. E6 associates with host UBE3A/E6-AP ubiquitin-protein ligase and modulates its activity. Protects host keratinocytes from apoptosis by mediating the degradation of host BAK1. May also inhibit host immune response.</text>
</comment>
<comment type="subunit">
    <text evidence="1">Forms homodimers. Interacts with ubiquitin-protein ligase UBE3A/E6-AP; this interaction stimulates UBE3A ubiquitin activity. Interacts with host BAK1.</text>
</comment>
<comment type="subcellular location">
    <subcellularLocation>
        <location evidence="1">Host cytoplasm</location>
    </subcellularLocation>
    <subcellularLocation>
        <location evidence="1">Host nucleus</location>
    </subcellularLocation>
</comment>
<comment type="similarity">
    <text evidence="1 2">Belongs to the papillomaviridae E6 protein family.</text>
</comment>